<proteinExistence type="inferred from homology"/>
<accession>B5E448</accession>
<sequence>MANVIIEKAKERMTQSHQSLAREFGGIRAGRANASLLDRVHVEYYGVETPLNQIASITIPEARVLLVTPFDKSSLKDIERALNASDLGITPANDGSVIRLVIPALTEETRRDLAKEVKKVGENAKVAVRNIRRDAMDEAKKQEKAKEITEDELKTLEKDIQKVTDDAVKHIDDMTANKEKELLEV</sequence>
<dbReference type="EMBL" id="CP001015">
    <property type="protein sequence ID" value="ACF55740.1"/>
    <property type="molecule type" value="Genomic_DNA"/>
</dbReference>
<dbReference type="SMR" id="B5E448"/>
<dbReference type="KEGG" id="spx:SPG_0872"/>
<dbReference type="HOGENOM" id="CLU_073981_2_0_9"/>
<dbReference type="GO" id="GO:0005737">
    <property type="term" value="C:cytoplasm"/>
    <property type="evidence" value="ECO:0007669"/>
    <property type="project" value="UniProtKB-SubCell"/>
</dbReference>
<dbReference type="GO" id="GO:0043023">
    <property type="term" value="F:ribosomal large subunit binding"/>
    <property type="evidence" value="ECO:0007669"/>
    <property type="project" value="TreeGrafter"/>
</dbReference>
<dbReference type="GO" id="GO:0006415">
    <property type="term" value="P:translational termination"/>
    <property type="evidence" value="ECO:0007669"/>
    <property type="project" value="UniProtKB-UniRule"/>
</dbReference>
<dbReference type="CDD" id="cd00520">
    <property type="entry name" value="RRF"/>
    <property type="match status" value="1"/>
</dbReference>
<dbReference type="FunFam" id="1.10.132.20:FF:000001">
    <property type="entry name" value="Ribosome-recycling factor"/>
    <property type="match status" value="1"/>
</dbReference>
<dbReference type="FunFam" id="3.30.1360.40:FF:000001">
    <property type="entry name" value="Ribosome-recycling factor"/>
    <property type="match status" value="1"/>
</dbReference>
<dbReference type="Gene3D" id="3.30.1360.40">
    <property type="match status" value="1"/>
</dbReference>
<dbReference type="Gene3D" id="1.10.132.20">
    <property type="entry name" value="Ribosome-recycling factor"/>
    <property type="match status" value="1"/>
</dbReference>
<dbReference type="HAMAP" id="MF_00040">
    <property type="entry name" value="RRF"/>
    <property type="match status" value="1"/>
</dbReference>
<dbReference type="InterPro" id="IPR002661">
    <property type="entry name" value="Ribosome_recyc_fac"/>
</dbReference>
<dbReference type="InterPro" id="IPR023584">
    <property type="entry name" value="Ribosome_recyc_fac_dom"/>
</dbReference>
<dbReference type="InterPro" id="IPR036191">
    <property type="entry name" value="RRF_sf"/>
</dbReference>
<dbReference type="NCBIfam" id="TIGR00496">
    <property type="entry name" value="frr"/>
    <property type="match status" value="1"/>
</dbReference>
<dbReference type="PANTHER" id="PTHR20982:SF3">
    <property type="entry name" value="MITOCHONDRIAL RIBOSOME RECYCLING FACTOR PSEUDO 1"/>
    <property type="match status" value="1"/>
</dbReference>
<dbReference type="PANTHER" id="PTHR20982">
    <property type="entry name" value="RIBOSOME RECYCLING FACTOR"/>
    <property type="match status" value="1"/>
</dbReference>
<dbReference type="Pfam" id="PF01765">
    <property type="entry name" value="RRF"/>
    <property type="match status" value="1"/>
</dbReference>
<dbReference type="SUPFAM" id="SSF55194">
    <property type="entry name" value="Ribosome recycling factor, RRF"/>
    <property type="match status" value="1"/>
</dbReference>
<evidence type="ECO:0000255" key="1">
    <source>
        <dbReference type="HAMAP-Rule" id="MF_00040"/>
    </source>
</evidence>
<organism>
    <name type="scientific">Streptococcus pneumoniae serotype 19F (strain G54)</name>
    <dbReference type="NCBI Taxonomy" id="512566"/>
    <lineage>
        <taxon>Bacteria</taxon>
        <taxon>Bacillati</taxon>
        <taxon>Bacillota</taxon>
        <taxon>Bacilli</taxon>
        <taxon>Lactobacillales</taxon>
        <taxon>Streptococcaceae</taxon>
        <taxon>Streptococcus</taxon>
    </lineage>
</organism>
<feature type="chain" id="PRO_1000090791" description="Ribosome-recycling factor">
    <location>
        <begin position="1"/>
        <end position="185"/>
    </location>
</feature>
<comment type="function">
    <text evidence="1">Responsible for the release of ribosomes from messenger RNA at the termination of protein biosynthesis. May increase the efficiency of translation by recycling ribosomes from one round of translation to another.</text>
</comment>
<comment type="subcellular location">
    <subcellularLocation>
        <location evidence="1">Cytoplasm</location>
    </subcellularLocation>
</comment>
<comment type="similarity">
    <text evidence="1">Belongs to the RRF family.</text>
</comment>
<reference key="1">
    <citation type="journal article" date="2001" name="Microb. Drug Resist.">
        <title>Annotated draft genomic sequence from a Streptococcus pneumoniae type 19F clinical isolate.</title>
        <authorList>
            <person name="Dopazo J."/>
            <person name="Mendoza A."/>
            <person name="Herrero J."/>
            <person name="Caldara F."/>
            <person name="Humbert Y."/>
            <person name="Friedli L."/>
            <person name="Guerrier M."/>
            <person name="Grand-Schenk E."/>
            <person name="Gandin C."/>
            <person name="de Francesco M."/>
            <person name="Polissi A."/>
            <person name="Buell G."/>
            <person name="Feger G."/>
            <person name="Garcia E."/>
            <person name="Peitsch M."/>
            <person name="Garcia-Bustos J.F."/>
        </authorList>
    </citation>
    <scope>NUCLEOTIDE SEQUENCE [LARGE SCALE GENOMIC DNA]</scope>
    <source>
        <strain>G54</strain>
    </source>
</reference>
<reference key="2">
    <citation type="submission" date="2008-03" db="EMBL/GenBank/DDBJ databases">
        <title>Pneumococcal beta glucoside metabolism investigated by whole genome comparison.</title>
        <authorList>
            <person name="Mulas L."/>
            <person name="Trappetti C."/>
            <person name="Hakenbeck R."/>
            <person name="Iannelli F."/>
            <person name="Pozzi G."/>
            <person name="Davidsen T.M."/>
            <person name="Tettelin H."/>
            <person name="Oggioni M."/>
        </authorList>
    </citation>
    <scope>NUCLEOTIDE SEQUENCE [LARGE SCALE GENOMIC DNA]</scope>
    <source>
        <strain>G54</strain>
    </source>
</reference>
<name>RRF_STRP4</name>
<protein>
    <recommendedName>
        <fullName evidence="1">Ribosome-recycling factor</fullName>
        <shortName evidence="1">RRF</shortName>
    </recommendedName>
    <alternativeName>
        <fullName evidence="1">Ribosome-releasing factor</fullName>
    </alternativeName>
</protein>
<gene>
    <name evidence="1" type="primary">frr</name>
    <name type="ordered locus">SPG_0872</name>
</gene>
<keyword id="KW-0963">Cytoplasm</keyword>
<keyword id="KW-0648">Protein biosynthesis</keyword>